<reference key="1">
    <citation type="journal article" date="2004" name="Science">
        <title>The Ashbya gossypii genome as a tool for mapping the ancient Saccharomyces cerevisiae genome.</title>
        <authorList>
            <person name="Dietrich F.S."/>
            <person name="Voegeli S."/>
            <person name="Brachat S."/>
            <person name="Lerch A."/>
            <person name="Gates K."/>
            <person name="Steiner S."/>
            <person name="Mohr C."/>
            <person name="Poehlmann R."/>
            <person name="Luedi P."/>
            <person name="Choi S."/>
            <person name="Wing R.A."/>
            <person name="Flavier A."/>
            <person name="Gaffney T.D."/>
            <person name="Philippsen P."/>
        </authorList>
    </citation>
    <scope>NUCLEOTIDE SEQUENCE [LARGE SCALE GENOMIC DNA]</scope>
    <source>
        <strain>ATCC 10895 / CBS 109.51 / FGSC 9923 / NRRL Y-1056</strain>
    </source>
</reference>
<reference key="2">
    <citation type="journal article" date="2013" name="G3 (Bethesda)">
        <title>Genomes of Ashbya fungi isolated from insects reveal four mating-type loci, numerous translocations, lack of transposons, and distinct gene duplications.</title>
        <authorList>
            <person name="Dietrich F.S."/>
            <person name="Voegeli S."/>
            <person name="Kuo S."/>
            <person name="Philippsen P."/>
        </authorList>
    </citation>
    <scope>GENOME REANNOTATION</scope>
    <source>
        <strain>ATCC 10895 / CBS 109.51 / FGSC 9923 / NRRL Y-1056</strain>
    </source>
</reference>
<gene>
    <name type="primary">DPH3</name>
    <name type="ordered locus">AGR374C</name>
</gene>
<protein>
    <recommendedName>
        <fullName>Diphthamide biosynthesis protein 3</fullName>
    </recommendedName>
</protein>
<name>DPH3_EREGS</name>
<accession>Q74Z32</accession>
<keyword id="KW-0963">Cytoplasm</keyword>
<keyword id="KW-0408">Iron</keyword>
<keyword id="KW-0479">Metal-binding</keyword>
<keyword id="KW-0539">Nucleus</keyword>
<keyword id="KW-0560">Oxidoreductase</keyword>
<keyword id="KW-1185">Reference proteome</keyword>
<comment type="function">
    <text evidence="2">Required for the first step of diphthamide biosynthesis, a post-translational modification of histidine which occurs in elongation factor 2. DPH1 and DPH2 transfer a 3-amino-3-carboxypropyl (ACP) group from S-adenosyl-L-methionine (SAM) to a histidine residue, the reaction is assisted by a reduction system comprising KTI11/DPH3 and a NADH-dependent reductase, predominantly CBR1. Acts as an electron donor to reduce the Fe-S cluster in DPH1-DPH2 keeping the [4Fe-4S] clusters in the active and reduced state. Restores iron to DPH1-DPH2 iron-sulfur clusters which have degraded from [4Fe-4S] to [3Fe-4S] by donating an iron atom to reform [4Fe-4S] clusters, in a manner dependent on the presence of elongation factor 2 and SAM. Associates with the elongator complex and is required for tRNA Wobble base modifications mediated by the elongator complex. The elongator complex is required for multiple tRNA modifications, including mcm5U (5-methoxycarbonylmethyl uridine), mcm5s 2U (5-methoxycarbonylmethyl-2-thiouridine), and ncm5U (5-carbamoylmethyl uridine).</text>
</comment>
<comment type="catalytic activity">
    <reaction evidence="2">
        <text>[3Fe-4S](1+)-[protein] + Fe(2+)-[Dph3] = [3Fe-4S](0)-[protein] + Fe(3+)-[Dph3]</text>
        <dbReference type="Rhea" id="RHEA:71235"/>
        <dbReference type="Rhea" id="RHEA-COMP:17996"/>
        <dbReference type="Rhea" id="RHEA-COMP:17997"/>
        <dbReference type="Rhea" id="RHEA-COMP:18002"/>
        <dbReference type="Rhea" id="RHEA-COMP:18003"/>
        <dbReference type="ChEBI" id="CHEBI:29033"/>
        <dbReference type="ChEBI" id="CHEBI:29034"/>
        <dbReference type="ChEBI" id="CHEBI:33751"/>
        <dbReference type="ChEBI" id="CHEBI:47402"/>
        <dbReference type="ChEBI" id="CHEBI:83228"/>
    </reaction>
</comment>
<comment type="catalytic activity">
    <reaction evidence="2">
        <text>2 [3Fe-4S](0)-[protein] + 2 Fe(2+)-[Dph3] + NADH = 2 [4Fe-4S](1+)-[protein] + 2 [Dph3] + NAD(+) + H(+)</text>
        <dbReference type="Rhea" id="RHEA:71239"/>
        <dbReference type="Rhea" id="RHEA-COMP:17997"/>
        <dbReference type="Rhea" id="RHEA-COMP:17998"/>
        <dbReference type="Rhea" id="RHEA-COMP:18001"/>
        <dbReference type="Rhea" id="RHEA-COMP:18002"/>
        <dbReference type="ChEBI" id="CHEBI:15378"/>
        <dbReference type="ChEBI" id="CHEBI:29033"/>
        <dbReference type="ChEBI" id="CHEBI:33723"/>
        <dbReference type="ChEBI" id="CHEBI:47402"/>
        <dbReference type="ChEBI" id="CHEBI:57540"/>
        <dbReference type="ChEBI" id="CHEBI:57945"/>
        <dbReference type="ChEBI" id="CHEBI:83228"/>
    </reaction>
</comment>
<comment type="cofactor">
    <cofactor evidence="2">
        <name>Fe(2+)</name>
        <dbReference type="ChEBI" id="CHEBI:29033"/>
    </cofactor>
</comment>
<comment type="pathway">
    <text evidence="2">Protein modification; peptidyl-diphthamide biosynthesis.</text>
</comment>
<comment type="subunit">
    <text evidence="2">Component of the 2-(3-amino-3-carboxypropyl)histidine synthase complex composed of DPH1, DPH2, DPH3 and a NADH-dependent reductase, predominantly CBR1.</text>
</comment>
<comment type="subcellular location">
    <subcellularLocation>
        <location evidence="1">Cytoplasm</location>
    </subcellularLocation>
    <subcellularLocation>
        <location evidence="1">Nucleus</location>
    </subcellularLocation>
</comment>
<comment type="domain">
    <text evidence="2">The DPH-type metal-binding (MB) domain can also bind zinc. However, iron is the physiological binding partner as zinc binding impairs the protein electron donor function.</text>
</comment>
<comment type="similarity">
    <text evidence="4">Belongs to the DPH3 family.</text>
</comment>
<feature type="chain" id="PRO_0000082626" description="Diphthamide biosynthesis protein 3">
    <location>
        <begin position="1"/>
        <end position="82"/>
    </location>
</feature>
<feature type="domain" description="DPH-type MB" evidence="3">
    <location>
        <begin position="3"/>
        <end position="59"/>
    </location>
</feature>
<feature type="binding site" evidence="2">
    <location>
        <position position="25"/>
    </location>
    <ligand>
        <name>Fe cation</name>
        <dbReference type="ChEBI" id="CHEBI:24875"/>
    </ligand>
</feature>
<feature type="binding site" evidence="2">
    <location>
        <position position="27"/>
    </location>
    <ligand>
        <name>Fe cation</name>
        <dbReference type="ChEBI" id="CHEBI:24875"/>
    </ligand>
</feature>
<feature type="binding site" evidence="2">
    <location>
        <position position="47"/>
    </location>
    <ligand>
        <name>Fe cation</name>
        <dbReference type="ChEBI" id="CHEBI:24875"/>
    </ligand>
</feature>
<feature type="binding site" evidence="2">
    <location>
        <position position="50"/>
    </location>
    <ligand>
        <name>Fe cation</name>
        <dbReference type="ChEBI" id="CHEBI:24875"/>
    </ligand>
</feature>
<sequence>MSVYDEVEIEDMTFDPDTQLFTYPCPCGDRFQISIDDMCDGEDIAVCPSCSLMIKVVYELHDLQEYYDEAGVEPPVPLVASA</sequence>
<dbReference type="EMBL" id="AE016820">
    <property type="protein sequence ID" value="AAS54864.1"/>
    <property type="molecule type" value="Genomic_DNA"/>
</dbReference>
<dbReference type="RefSeq" id="NP_987040.1">
    <property type="nucleotide sequence ID" value="NM_212102.1"/>
</dbReference>
<dbReference type="SMR" id="Q74Z32"/>
<dbReference type="FunCoup" id="Q74Z32">
    <property type="interactions" value="358"/>
</dbReference>
<dbReference type="STRING" id="284811.Q74Z32"/>
<dbReference type="EnsemblFungi" id="AAS54864">
    <property type="protein sequence ID" value="AAS54864"/>
    <property type="gene ID" value="AGOS_AGR374C"/>
</dbReference>
<dbReference type="GeneID" id="4623343"/>
<dbReference type="KEGG" id="ago:AGOS_AGR374C"/>
<dbReference type="eggNOG" id="KOG2923">
    <property type="taxonomic scope" value="Eukaryota"/>
</dbReference>
<dbReference type="HOGENOM" id="CLU_155991_4_2_1"/>
<dbReference type="InParanoid" id="Q74Z32"/>
<dbReference type="OMA" id="LFTYPCP"/>
<dbReference type="OrthoDB" id="66964at2759"/>
<dbReference type="UniPathway" id="UPA00559"/>
<dbReference type="Proteomes" id="UP000000591">
    <property type="component" value="Chromosome VII"/>
</dbReference>
<dbReference type="GO" id="GO:0005829">
    <property type="term" value="C:cytosol"/>
    <property type="evidence" value="ECO:0007669"/>
    <property type="project" value="EnsemblFungi"/>
</dbReference>
<dbReference type="GO" id="GO:0005634">
    <property type="term" value="C:nucleus"/>
    <property type="evidence" value="ECO:0007669"/>
    <property type="project" value="UniProtKB-SubCell"/>
</dbReference>
<dbReference type="GO" id="GO:0090560">
    <property type="term" value="F:2-(3-amino-3-carboxypropyl)histidine synthase activity"/>
    <property type="evidence" value="ECO:0007669"/>
    <property type="project" value="EnsemblFungi"/>
</dbReference>
<dbReference type="GO" id="GO:0008198">
    <property type="term" value="F:ferrous iron binding"/>
    <property type="evidence" value="ECO:0000250"/>
    <property type="project" value="UniProtKB"/>
</dbReference>
<dbReference type="GO" id="GO:0034986">
    <property type="term" value="F:iron chaperone activity"/>
    <property type="evidence" value="ECO:0000250"/>
    <property type="project" value="UniProtKB"/>
</dbReference>
<dbReference type="GO" id="GO:0016730">
    <property type="term" value="F:oxidoreductase activity, acting on iron-sulfur proteins as donors"/>
    <property type="evidence" value="ECO:0007669"/>
    <property type="project" value="EnsemblFungi"/>
</dbReference>
<dbReference type="GO" id="GO:0008270">
    <property type="term" value="F:zinc ion binding"/>
    <property type="evidence" value="ECO:0007669"/>
    <property type="project" value="EnsemblFungi"/>
</dbReference>
<dbReference type="GO" id="GO:0017183">
    <property type="term" value="P:protein histidyl modification to diphthamide"/>
    <property type="evidence" value="ECO:0000250"/>
    <property type="project" value="UniProtKB"/>
</dbReference>
<dbReference type="GO" id="GO:0002926">
    <property type="term" value="P:tRNA wobble base 5-methoxycarbonylmethyl-2-thiouridinylation"/>
    <property type="evidence" value="ECO:0000250"/>
    <property type="project" value="UniProtKB"/>
</dbReference>
<dbReference type="FunFam" id="3.10.660.10:FF:000001">
    <property type="entry name" value="Diphthamide biosynthesis 3"/>
    <property type="match status" value="1"/>
</dbReference>
<dbReference type="Gene3D" id="3.10.660.10">
    <property type="entry name" value="DPH Zinc finger"/>
    <property type="match status" value="1"/>
</dbReference>
<dbReference type="InterPro" id="IPR044248">
    <property type="entry name" value="DPH3/4-like"/>
</dbReference>
<dbReference type="InterPro" id="IPR007872">
    <property type="entry name" value="DPH_MB_dom"/>
</dbReference>
<dbReference type="InterPro" id="IPR036671">
    <property type="entry name" value="DPH_MB_sf"/>
</dbReference>
<dbReference type="PANTHER" id="PTHR21454:SF31">
    <property type="entry name" value="DIPHTHAMIDE BIOSYNTHESIS PROTEIN 3"/>
    <property type="match status" value="1"/>
</dbReference>
<dbReference type="PANTHER" id="PTHR21454">
    <property type="entry name" value="DPH3 HOMOLOG-RELATED"/>
    <property type="match status" value="1"/>
</dbReference>
<dbReference type="Pfam" id="PF05207">
    <property type="entry name" value="Zn_ribbon_CSL"/>
    <property type="match status" value="1"/>
</dbReference>
<dbReference type="SUPFAM" id="SSF144217">
    <property type="entry name" value="CSL zinc finger"/>
    <property type="match status" value="1"/>
</dbReference>
<dbReference type="PROSITE" id="PS51074">
    <property type="entry name" value="DPH_MB"/>
    <property type="match status" value="1"/>
</dbReference>
<evidence type="ECO:0000250" key="1"/>
<evidence type="ECO:0000250" key="2">
    <source>
        <dbReference type="UniProtKB" id="Q3E840"/>
    </source>
</evidence>
<evidence type="ECO:0000255" key="3">
    <source>
        <dbReference type="PROSITE-ProRule" id="PRU00456"/>
    </source>
</evidence>
<evidence type="ECO:0000305" key="4"/>
<proteinExistence type="inferred from homology"/>
<organism>
    <name type="scientific">Eremothecium gossypii (strain ATCC 10895 / CBS 109.51 / FGSC 9923 / NRRL Y-1056)</name>
    <name type="common">Yeast</name>
    <name type="synonym">Ashbya gossypii</name>
    <dbReference type="NCBI Taxonomy" id="284811"/>
    <lineage>
        <taxon>Eukaryota</taxon>
        <taxon>Fungi</taxon>
        <taxon>Dikarya</taxon>
        <taxon>Ascomycota</taxon>
        <taxon>Saccharomycotina</taxon>
        <taxon>Saccharomycetes</taxon>
        <taxon>Saccharomycetales</taxon>
        <taxon>Saccharomycetaceae</taxon>
        <taxon>Eremothecium</taxon>
    </lineage>
</organism>